<dbReference type="EMBL" id="AE006914">
    <property type="protein sequence ID" value="AAL02643.1"/>
    <property type="molecule type" value="Genomic_DNA"/>
</dbReference>
<dbReference type="PIR" id="A97713">
    <property type="entry name" value="A97713"/>
</dbReference>
<dbReference type="RefSeq" id="WP_010976788.1">
    <property type="nucleotide sequence ID" value="NC_003103.1"/>
</dbReference>
<dbReference type="GeneID" id="928091"/>
<dbReference type="KEGG" id="rco:RC0105"/>
<dbReference type="PATRIC" id="fig|272944.4.peg.124"/>
<dbReference type="HOGENOM" id="CLU_1141892_0_0_5"/>
<dbReference type="Proteomes" id="UP000000816">
    <property type="component" value="Chromosome"/>
</dbReference>
<dbReference type="GO" id="GO:0009279">
    <property type="term" value="C:cell outer membrane"/>
    <property type="evidence" value="ECO:0007669"/>
    <property type="project" value="UniProtKB-SubCell"/>
</dbReference>
<dbReference type="GO" id="GO:0055085">
    <property type="term" value="P:transmembrane transport"/>
    <property type="evidence" value="ECO:0007669"/>
    <property type="project" value="TreeGrafter"/>
</dbReference>
<dbReference type="Gene3D" id="2.40.160.20">
    <property type="match status" value="1"/>
</dbReference>
<dbReference type="InterPro" id="IPR011250">
    <property type="entry name" value="OMP/PagP_b-brl"/>
</dbReference>
<dbReference type="InterPro" id="IPR005618">
    <property type="entry name" value="OMPW"/>
</dbReference>
<dbReference type="PANTHER" id="PTHR36920">
    <property type="match status" value="1"/>
</dbReference>
<dbReference type="PANTHER" id="PTHR36920:SF1">
    <property type="entry name" value="OUTER MEMBRANE PROTEIN W"/>
    <property type="match status" value="1"/>
</dbReference>
<dbReference type="Pfam" id="PF03922">
    <property type="entry name" value="OmpW"/>
    <property type="match status" value="1"/>
</dbReference>
<dbReference type="SUPFAM" id="SSF56925">
    <property type="entry name" value="OMPA-like"/>
    <property type="match status" value="1"/>
</dbReference>
<reference key="1">
    <citation type="journal article" date="2001" name="Science">
        <title>Mechanisms of evolution in Rickettsia conorii and R. prowazekii.</title>
        <authorList>
            <person name="Ogata H."/>
            <person name="Audic S."/>
            <person name="Renesto-Audiffren P."/>
            <person name="Fournier P.-E."/>
            <person name="Barbe V."/>
            <person name="Samson D."/>
            <person name="Roux V."/>
            <person name="Cossart P."/>
            <person name="Weissenbach J."/>
            <person name="Claverie J.-M."/>
            <person name="Raoult D."/>
        </authorList>
    </citation>
    <scope>NUCLEOTIDE SEQUENCE [LARGE SCALE GENOMIC DNA]</scope>
    <source>
        <strain>ATCC VR-613 / Malish 7</strain>
    </source>
</reference>
<sequence length="244" mass="26567">MLRIVKKLGIILFVSTISINSFAKSMYDDVDSASDYDSTPYYENEGSLVFKMRLGGVVSSAKQKGLPTPTSPQPVSVGEVAKNGYGGDASTTIFFNNYLATELSLGFNVLRTKYTSLAAVAHNYGVDNVKLGKHKPIYMIPATITGQFHIAPYGGIRPYIGIGYHGSYMLTQATGLKIRNGHGAVGQIGVDFYAKDDTLINIDVRQFFLNPKLEYKPNLVGNKTMTSKVKLNPLIVSIGIGFTF</sequence>
<keyword id="KW-0998">Cell outer membrane</keyword>
<keyword id="KW-0472">Membrane</keyword>
<keyword id="KW-0732">Signal</keyword>
<keyword id="KW-0812">Transmembrane</keyword>
<keyword id="KW-1134">Transmembrane beta strand</keyword>
<comment type="subcellular location">
    <subcellularLocation>
        <location evidence="1">Cell outer membrane</location>
    </subcellularLocation>
</comment>
<comment type="similarity">
    <text evidence="3">Belongs to the OmpW/AlkL family.</text>
</comment>
<feature type="signal peptide" evidence="2">
    <location>
        <begin position="1"/>
        <end position="23"/>
    </location>
</feature>
<feature type="chain" id="PRO_0000262721" description="Putative outer membrane protein RC0105">
    <location>
        <begin position="24"/>
        <end position="244"/>
    </location>
</feature>
<evidence type="ECO:0000250" key="1"/>
<evidence type="ECO:0000255" key="2"/>
<evidence type="ECO:0000305" key="3"/>
<accession>Q92JG2</accession>
<protein>
    <recommendedName>
        <fullName>Putative outer membrane protein RC0105</fullName>
    </recommendedName>
</protein>
<gene>
    <name type="ordered locus">RC0105</name>
</gene>
<organism>
    <name type="scientific">Rickettsia conorii (strain ATCC VR-613 / Malish 7)</name>
    <dbReference type="NCBI Taxonomy" id="272944"/>
    <lineage>
        <taxon>Bacteria</taxon>
        <taxon>Pseudomonadati</taxon>
        <taxon>Pseudomonadota</taxon>
        <taxon>Alphaproteobacteria</taxon>
        <taxon>Rickettsiales</taxon>
        <taxon>Rickettsiaceae</taxon>
        <taxon>Rickettsieae</taxon>
        <taxon>Rickettsia</taxon>
        <taxon>spotted fever group</taxon>
    </lineage>
</organism>
<proteinExistence type="inferred from homology"/>
<name>Y105_RICCN</name>